<organism>
    <name type="scientific">Mycosarcoma maydis</name>
    <name type="common">Corn smut fungus</name>
    <name type="synonym">Ustilago maydis</name>
    <dbReference type="NCBI Taxonomy" id="5270"/>
    <lineage>
        <taxon>Eukaryota</taxon>
        <taxon>Fungi</taxon>
        <taxon>Dikarya</taxon>
        <taxon>Basidiomycota</taxon>
        <taxon>Ustilaginomycotina</taxon>
        <taxon>Ustilaginomycetes</taxon>
        <taxon>Ustilaginales</taxon>
        <taxon>Ustilaginaceae</taxon>
        <taxon>Mycosarcoma</taxon>
    </lineage>
</organism>
<gene>
    <name type="primary">VRG4</name>
    <name type="ORF">UMAG_01062</name>
</gene>
<reference key="1">
    <citation type="journal article" date="2006" name="Nature">
        <title>Insights from the genome of the biotrophic fungal plant pathogen Ustilago maydis.</title>
        <authorList>
            <person name="Kaemper J."/>
            <person name="Kahmann R."/>
            <person name="Boelker M."/>
            <person name="Ma L.-J."/>
            <person name="Brefort T."/>
            <person name="Saville B.J."/>
            <person name="Banuett F."/>
            <person name="Kronstad J.W."/>
            <person name="Gold S.E."/>
            <person name="Mueller O."/>
            <person name="Perlin M.H."/>
            <person name="Woesten H.A.B."/>
            <person name="de Vries R."/>
            <person name="Ruiz-Herrera J."/>
            <person name="Reynaga-Pena C.G."/>
            <person name="Snetselaar K."/>
            <person name="McCann M."/>
            <person name="Perez-Martin J."/>
            <person name="Feldbruegge M."/>
            <person name="Basse C.W."/>
            <person name="Steinberg G."/>
            <person name="Ibeas J.I."/>
            <person name="Holloman W."/>
            <person name="Guzman P."/>
            <person name="Farman M.L."/>
            <person name="Stajich J.E."/>
            <person name="Sentandreu R."/>
            <person name="Gonzalez-Prieto J.M."/>
            <person name="Kennell J.C."/>
            <person name="Molina L."/>
            <person name="Schirawski J."/>
            <person name="Mendoza-Mendoza A."/>
            <person name="Greilinger D."/>
            <person name="Muench K."/>
            <person name="Roessel N."/>
            <person name="Scherer M."/>
            <person name="Vranes M."/>
            <person name="Ladendorf O."/>
            <person name="Vincon V."/>
            <person name="Fuchs U."/>
            <person name="Sandrock B."/>
            <person name="Meng S."/>
            <person name="Ho E.C.H."/>
            <person name="Cahill M.J."/>
            <person name="Boyce K.J."/>
            <person name="Klose J."/>
            <person name="Klosterman S.J."/>
            <person name="Deelstra H.J."/>
            <person name="Ortiz-Castellanos L."/>
            <person name="Li W."/>
            <person name="Sanchez-Alonso P."/>
            <person name="Schreier P.H."/>
            <person name="Haeuser-Hahn I."/>
            <person name="Vaupel M."/>
            <person name="Koopmann E."/>
            <person name="Friedrich G."/>
            <person name="Voss H."/>
            <person name="Schlueter T."/>
            <person name="Margolis J."/>
            <person name="Platt D."/>
            <person name="Swimmer C."/>
            <person name="Gnirke A."/>
            <person name="Chen F."/>
            <person name="Vysotskaia V."/>
            <person name="Mannhaupt G."/>
            <person name="Gueldener U."/>
            <person name="Muensterkoetter M."/>
            <person name="Haase D."/>
            <person name="Oesterheld M."/>
            <person name="Mewes H.-W."/>
            <person name="Mauceli E.W."/>
            <person name="DeCaprio D."/>
            <person name="Wade C.M."/>
            <person name="Butler J."/>
            <person name="Young S.K."/>
            <person name="Jaffe D.B."/>
            <person name="Calvo S.E."/>
            <person name="Nusbaum C."/>
            <person name="Galagan J.E."/>
            <person name="Birren B.W."/>
        </authorList>
    </citation>
    <scope>NUCLEOTIDE SEQUENCE [LARGE SCALE GENOMIC DNA]</scope>
    <source>
        <strain>DSM 14603 / FGSC 9021 / UM521</strain>
    </source>
</reference>
<reference key="2">
    <citation type="submission" date="2014-09" db="EMBL/GenBank/DDBJ databases">
        <authorList>
            <person name="Gueldener U."/>
            <person name="Muensterkoetter M."/>
            <person name="Walter M.C."/>
            <person name="Mannhaupt G."/>
            <person name="Kahmann R."/>
        </authorList>
    </citation>
    <scope>GENOME REANNOTATION</scope>
    <source>
        <strain>DSM 14603 / FGSC 9021 / UM521</strain>
    </source>
</reference>
<keyword id="KW-0968">Cytoplasmic vesicle</keyword>
<keyword id="KW-0256">Endoplasmic reticulum</keyword>
<keyword id="KW-0325">Glycoprotein</keyword>
<keyword id="KW-0333">Golgi apparatus</keyword>
<keyword id="KW-0472">Membrane</keyword>
<keyword id="KW-1185">Reference proteome</keyword>
<keyword id="KW-0762">Sugar transport</keyword>
<keyword id="KW-0812">Transmembrane</keyword>
<keyword id="KW-1133">Transmembrane helix</keyword>
<keyword id="KW-0813">Transport</keyword>
<name>GMT_MYCMD</name>
<comment type="function">
    <text evidence="1">Involved in the import of GDP-mannose from the cytoplasm into the Golgi lumen.</text>
</comment>
<comment type="subunit">
    <text evidence="1">Homooligomer.</text>
</comment>
<comment type="subcellular location">
    <subcellularLocation>
        <location evidence="1">Golgi apparatus membrane</location>
        <topology evidence="1">Multi-pass membrane protein</topology>
    </subcellularLocation>
    <subcellularLocation>
        <location evidence="1">Cytoplasmic vesicle membrane</location>
        <topology evidence="1">Multi-pass membrane protein</topology>
    </subcellularLocation>
    <subcellularLocation>
        <location evidence="1">Endoplasmic reticulum membrane</location>
        <topology evidence="1">Multi-pass membrane protein</topology>
    </subcellularLocation>
</comment>
<comment type="similarity">
    <text evidence="4">Belongs to the TPT transporter family. SLC35D subfamily.</text>
</comment>
<evidence type="ECO:0000250" key="1"/>
<evidence type="ECO:0000255" key="2"/>
<evidence type="ECO:0000256" key="3">
    <source>
        <dbReference type="SAM" id="MobiDB-lite"/>
    </source>
</evidence>
<evidence type="ECO:0000305" key="4"/>
<proteinExistence type="inferred from homology"/>
<sequence length="471" mass="51117">MSSGSRSFFTPQETRLELPQGAAHQTPDITRPASPSENDRAPFLNGGPSDAREDVRMGAKALRNDSEKPAVGIMALAPILCYCAASITMTVVNKFTVSGRGFNMNLLVLLIQSTVGVTCVWIAERAGLIQLRGLNAKDAWNWMPLSIMLVFVIWTGSKALQYLNISVYTIFKNLTIILIAYGEVMWFGGRVTRIVLCSFLFMVLSSVIAAWSDISNVFAIGNLSMPHTPDSIMGGMAKDPITGALFPAFDPLKTEKDAINAQLQSASANDVIEGFQGYGLLSSGYVWMALNCICSATYVLLMRKRIKVTGFKDWDTMFYNNFLSIPVLLLMSFLVEDWSYANLHKNFPDDKQTKLISAIVFSGACAILISYTTAWCIRATSSTTYSMVGALNKLPVALSGMVFFHDPPVTFSSVSAIAVGFFAGLVYAFGKNKQAEAAKLGGHASANGSSSMSGSKDGSSLPMHTFNDRKD</sequence>
<protein>
    <recommendedName>
        <fullName>GDP-mannose transporter</fullName>
        <shortName>GMT</shortName>
    </recommendedName>
</protein>
<accession>Q4PFQ1</accession>
<accession>A0A0D1CDI8</accession>
<dbReference type="EMBL" id="CM003141">
    <property type="protein sequence ID" value="KIS71152.1"/>
    <property type="molecule type" value="Genomic_DNA"/>
</dbReference>
<dbReference type="RefSeq" id="XP_011387028.1">
    <property type="nucleotide sequence ID" value="XM_011388726.1"/>
</dbReference>
<dbReference type="SMR" id="Q4PFQ1"/>
<dbReference type="FunCoup" id="Q4PFQ1">
    <property type="interactions" value="163"/>
</dbReference>
<dbReference type="STRING" id="237631.Q4PFQ1"/>
<dbReference type="GlyCosmos" id="Q4PFQ1">
    <property type="glycosylation" value="2 sites, No reported glycans"/>
</dbReference>
<dbReference type="EnsemblFungi" id="KIS71152">
    <property type="protein sequence ID" value="KIS71152"/>
    <property type="gene ID" value="UMAG_01062"/>
</dbReference>
<dbReference type="GeneID" id="23562184"/>
<dbReference type="KEGG" id="uma:UMAG_01062"/>
<dbReference type="VEuPathDB" id="FungiDB:UMAG_01062"/>
<dbReference type="eggNOG" id="KOG1444">
    <property type="taxonomic scope" value="Eukaryota"/>
</dbReference>
<dbReference type="HOGENOM" id="CLU_025360_1_2_1"/>
<dbReference type="InParanoid" id="Q4PFQ1"/>
<dbReference type="OMA" id="KLIRVWI"/>
<dbReference type="OrthoDB" id="417037at2759"/>
<dbReference type="Proteomes" id="UP000000561">
    <property type="component" value="Chromosome 2"/>
</dbReference>
<dbReference type="GO" id="GO:0030659">
    <property type="term" value="C:cytoplasmic vesicle membrane"/>
    <property type="evidence" value="ECO:0007669"/>
    <property type="project" value="UniProtKB-SubCell"/>
</dbReference>
<dbReference type="GO" id="GO:0005789">
    <property type="term" value="C:endoplasmic reticulum membrane"/>
    <property type="evidence" value="ECO:0007669"/>
    <property type="project" value="UniProtKB-SubCell"/>
</dbReference>
<dbReference type="GO" id="GO:0005794">
    <property type="term" value="C:Golgi apparatus"/>
    <property type="evidence" value="ECO:0000318"/>
    <property type="project" value="GO_Central"/>
</dbReference>
<dbReference type="GO" id="GO:0000139">
    <property type="term" value="C:Golgi membrane"/>
    <property type="evidence" value="ECO:0007669"/>
    <property type="project" value="UniProtKB-SubCell"/>
</dbReference>
<dbReference type="GO" id="GO:0015297">
    <property type="term" value="F:antiporter activity"/>
    <property type="evidence" value="ECO:0000318"/>
    <property type="project" value="GO_Central"/>
</dbReference>
<dbReference type="GO" id="GO:0005458">
    <property type="term" value="F:GDP-mannose transmembrane transporter activity"/>
    <property type="evidence" value="ECO:0000318"/>
    <property type="project" value="GO_Central"/>
</dbReference>
<dbReference type="GO" id="GO:1990570">
    <property type="term" value="P:GDP-mannose transmembrane transport"/>
    <property type="evidence" value="ECO:0000318"/>
    <property type="project" value="GO_Central"/>
</dbReference>
<dbReference type="InterPro" id="IPR050186">
    <property type="entry name" value="TPT_transporter"/>
</dbReference>
<dbReference type="NCBIfam" id="TIGR00803">
    <property type="entry name" value="nst"/>
    <property type="match status" value="1"/>
</dbReference>
<dbReference type="PANTHER" id="PTHR11132">
    <property type="entry name" value="SOLUTE CARRIER FAMILY 35"/>
    <property type="match status" value="1"/>
</dbReference>
<feature type="chain" id="PRO_0000333537" description="GDP-mannose transporter">
    <location>
        <begin position="1"/>
        <end position="471"/>
    </location>
</feature>
<feature type="topological domain" description="Cytoplasmic" evidence="1">
    <location>
        <begin position="1"/>
        <end position="70"/>
    </location>
</feature>
<feature type="transmembrane region" description="Helical" evidence="2">
    <location>
        <begin position="71"/>
        <end position="91"/>
    </location>
</feature>
<feature type="topological domain" description="Lumenal" evidence="1">
    <location>
        <begin position="92"/>
        <end position="101"/>
    </location>
</feature>
<feature type="transmembrane region" description="Helical" evidence="2">
    <location>
        <begin position="102"/>
        <end position="122"/>
    </location>
</feature>
<feature type="topological domain" description="Cytoplasmic" evidence="1">
    <location>
        <begin position="123"/>
        <end position="139"/>
    </location>
</feature>
<feature type="transmembrane region" description="Helical" evidence="2">
    <location>
        <begin position="140"/>
        <end position="160"/>
    </location>
</feature>
<feature type="topological domain" description="Lumenal" evidence="1">
    <location>
        <begin position="161"/>
        <end position="166"/>
    </location>
</feature>
<feature type="transmembrane region" description="Helical" evidence="2">
    <location>
        <begin position="167"/>
        <end position="187"/>
    </location>
</feature>
<feature type="topological domain" description="Cytoplasmic" evidence="1">
    <location>
        <begin position="188"/>
        <end position="193"/>
    </location>
</feature>
<feature type="transmembrane region" description="Helical" evidence="2">
    <location>
        <begin position="194"/>
        <end position="214"/>
    </location>
</feature>
<feature type="topological domain" description="Lumenal" evidence="1">
    <location>
        <begin position="215"/>
        <end position="279"/>
    </location>
</feature>
<feature type="transmembrane region" description="Helical" evidence="2">
    <location>
        <begin position="280"/>
        <end position="300"/>
    </location>
</feature>
<feature type="topological domain" description="Cytoplasmic" evidence="1">
    <location>
        <begin position="301"/>
        <end position="315"/>
    </location>
</feature>
<feature type="transmembrane region" description="Helical" evidence="2">
    <location>
        <begin position="316"/>
        <end position="336"/>
    </location>
</feature>
<feature type="topological domain" description="Lumenal" evidence="1">
    <location>
        <begin position="337"/>
        <end position="354"/>
    </location>
</feature>
<feature type="transmembrane region" description="Helical" evidence="2">
    <location>
        <begin position="355"/>
        <end position="375"/>
    </location>
</feature>
<feature type="topological domain" description="Cytoplasmic" evidence="1">
    <location>
        <begin position="376"/>
        <end position="383"/>
    </location>
</feature>
<feature type="transmembrane region" description="Helical" evidence="2">
    <location>
        <begin position="384"/>
        <end position="404"/>
    </location>
</feature>
<feature type="topological domain" description="Lumenal" evidence="1">
    <location>
        <begin position="405"/>
        <end position="408"/>
    </location>
</feature>
<feature type="transmembrane region" description="Helical" evidence="2">
    <location>
        <begin position="409"/>
        <end position="429"/>
    </location>
</feature>
<feature type="topological domain" description="Cytoplasmic" evidence="1">
    <location>
        <begin position="430"/>
        <end position="471"/>
    </location>
</feature>
<feature type="region of interest" description="Disordered" evidence="3">
    <location>
        <begin position="1"/>
        <end position="52"/>
    </location>
</feature>
<feature type="region of interest" description="Disordered" evidence="3">
    <location>
        <begin position="442"/>
        <end position="471"/>
    </location>
</feature>
<feature type="compositionally biased region" description="Polar residues" evidence="3">
    <location>
        <begin position="1"/>
        <end position="13"/>
    </location>
</feature>
<feature type="compositionally biased region" description="Low complexity" evidence="3">
    <location>
        <begin position="442"/>
        <end position="460"/>
    </location>
</feature>
<feature type="glycosylation site" description="N-linked (GlcNAc...) asparagine" evidence="2">
    <location>
        <position position="164"/>
    </location>
</feature>
<feature type="glycosylation site" description="N-linked (GlcNAc...) asparagine" evidence="2">
    <location>
        <position position="222"/>
    </location>
</feature>